<comment type="function">
    <text evidence="3 5 6 7">V region of the variable domain of T cell receptor (TR) beta chain that participates in the antigen recognition (PubMed:24600447). Alpha-beta T cell receptors are antigen specific receptors which are essential to the immune response and are present on the cell surface of T lymphocytes. Recognize peptide-major histocompatibility (MH) (pMH) complexes that are displayed by antigen presenting cells (APC), a prerequisite for efficient T cell adaptive immunity against pathogens (PubMed:25493333). Binding of alpha-beta TR to pMH complex initiates TR-CD3 clustering on the cell surface and intracellular activation of LCK that phosphorylates the ITAM motifs of CD3G, CD3D, CD3E and CD247 enabling the recruitment of ZAP70. In turn ZAP70 phosphorylates LAT, which recruits numerous signaling molecules to form the LAT signalosome. The LAT signalosome propagates signal branching to three major signaling pathways, the calcium, the mitogen-activated protein kinase (MAPK) kinase and the nuclear factor NF-kappa-B (NF-kB) pathways, leading to the mobilization of transcription factors that are critical for gene expression and essential for T cell growth and differentiation (PubMed:23524462). The T cell repertoire is generated in the thymus, by V-(D)-J rearrangement. This repertoire is then shaped by intrathymic selection events to generate a peripheral T cell pool of self-MH restricted, non-autoaggressive T cells. Post-thymic interaction of alpha-beta TR with the pMH complexes shapes TR structural and functional avidity (PubMed:15040585).</text>
</comment>
<comment type="subunit">
    <text evidence="4">Alpha-beta TR is a heterodimer composed of an alpha and beta chain; disulfide-linked. The alpha-beta TR is associated with the transmembrane signaling CD3 coreceptor proteins to form the TR-CD3 (TcR or TCR). The assembly of alpha-beta TR heterodimers with CD3 occurs in the endoplasmic reticulum where a single alpha-beta TR heterodimer associates with one CD3D-CD3E heterodimer, one CD3G-CD3E heterodimer and one CD247 homodimer forming a stable octameric structure. CD3D-CD3E and CD3G-CD3E heterodimers preferentially associate with TR alpha and TR beta chains, respectively. The association of the CD247 homodimer is the last step of TcR assembly in the endoplasmic reticulum and is required for transport to the cell surface.</text>
</comment>
<comment type="subcellular location">
    <subcellularLocation>
        <location evidence="4">Cell membrane</location>
    </subcellularLocation>
</comment>
<comment type="polymorphism">
    <text evidence="10">There are several alleles. The sequence shown is that of IMGT allele TRBV4-1*01.</text>
</comment>
<proteinExistence type="evidence at protein level"/>
<reference key="1">
    <citation type="journal article" date="1996" name="Science">
        <title>The complete 685-kilobase DNA sequence of the human beta T cell receptor locus.</title>
        <authorList>
            <person name="Rowen L."/>
            <person name="Koop B.F."/>
            <person name="Hood L."/>
        </authorList>
    </citation>
    <scope>NUCLEOTIDE SEQUENCE [GENOMIC DNA] (IMGT ALLELE TRBV4-1*01)</scope>
</reference>
<reference key="2">
    <citation type="journal article" date="2003" name="Nature">
        <title>The DNA sequence of human chromosome 7.</title>
        <authorList>
            <person name="Hillier L.W."/>
            <person name="Fulton R.S."/>
            <person name="Fulton L.A."/>
            <person name="Graves T.A."/>
            <person name="Pepin K.H."/>
            <person name="Wagner-McPherson C."/>
            <person name="Layman D."/>
            <person name="Maas J."/>
            <person name="Jaeger S."/>
            <person name="Walker R."/>
            <person name="Wylie K."/>
            <person name="Sekhon M."/>
            <person name="Becker M.C."/>
            <person name="O'Laughlin M.D."/>
            <person name="Schaller M.E."/>
            <person name="Fewell G.A."/>
            <person name="Delehaunty K.D."/>
            <person name="Miner T.L."/>
            <person name="Nash W.E."/>
            <person name="Cordes M."/>
            <person name="Du H."/>
            <person name="Sun H."/>
            <person name="Edwards J."/>
            <person name="Bradshaw-Cordum H."/>
            <person name="Ali J."/>
            <person name="Andrews S."/>
            <person name="Isak A."/>
            <person name="Vanbrunt A."/>
            <person name="Nguyen C."/>
            <person name="Du F."/>
            <person name="Lamar B."/>
            <person name="Courtney L."/>
            <person name="Kalicki J."/>
            <person name="Ozersky P."/>
            <person name="Bielicki L."/>
            <person name="Scott K."/>
            <person name="Holmes A."/>
            <person name="Harkins R."/>
            <person name="Harris A."/>
            <person name="Strong C.M."/>
            <person name="Hou S."/>
            <person name="Tomlinson C."/>
            <person name="Dauphin-Kohlberg S."/>
            <person name="Kozlowicz-Reilly A."/>
            <person name="Leonard S."/>
            <person name="Rohlfing T."/>
            <person name="Rock S.M."/>
            <person name="Tin-Wollam A.-M."/>
            <person name="Abbott A."/>
            <person name="Minx P."/>
            <person name="Maupin R."/>
            <person name="Strowmatt C."/>
            <person name="Latreille P."/>
            <person name="Miller N."/>
            <person name="Johnson D."/>
            <person name="Murray J."/>
            <person name="Woessner J.P."/>
            <person name="Wendl M.C."/>
            <person name="Yang S.-P."/>
            <person name="Schultz B.R."/>
            <person name="Wallis J.W."/>
            <person name="Spieth J."/>
            <person name="Bieri T.A."/>
            <person name="Nelson J.O."/>
            <person name="Berkowicz N."/>
            <person name="Wohldmann P.E."/>
            <person name="Cook L.L."/>
            <person name="Hickenbotham M.T."/>
            <person name="Eldred J."/>
            <person name="Williams D."/>
            <person name="Bedell J.A."/>
            <person name="Mardis E.R."/>
            <person name="Clifton S.W."/>
            <person name="Chissoe S.L."/>
            <person name="Marra M.A."/>
            <person name="Raymond C."/>
            <person name="Haugen E."/>
            <person name="Gillett W."/>
            <person name="Zhou Y."/>
            <person name="James R."/>
            <person name="Phelps K."/>
            <person name="Iadanoto S."/>
            <person name="Bubb K."/>
            <person name="Simms E."/>
            <person name="Levy R."/>
            <person name="Clendenning J."/>
            <person name="Kaul R."/>
            <person name="Kent W.J."/>
            <person name="Furey T.S."/>
            <person name="Baertsch R.A."/>
            <person name="Brent M.R."/>
            <person name="Keibler E."/>
            <person name="Flicek P."/>
            <person name="Bork P."/>
            <person name="Suyama M."/>
            <person name="Bailey J.A."/>
            <person name="Portnoy M.E."/>
            <person name="Torrents D."/>
            <person name="Chinwalla A.T."/>
            <person name="Gish W.R."/>
            <person name="Eddy S.R."/>
            <person name="McPherson J.D."/>
            <person name="Olson M.V."/>
            <person name="Eichler E.E."/>
            <person name="Green E.D."/>
            <person name="Waterston R.H."/>
            <person name="Wilson R.K."/>
        </authorList>
    </citation>
    <scope>NUCLEOTIDE SEQUENCE [LARGE SCALE GENOMIC DNA] (IMGT ALLELE TRBV4-1*01)</scope>
</reference>
<reference key="3">
    <citation type="book" date="2001" name="The T Cell Receptor FactsBook.">
        <title>The T Cell Receptor FactsBook.</title>
        <editorList>
            <person name="Lefranc M.P."/>
            <person name="Lefranc G."/>
        </editorList>
        <authorList>
            <person name="Lefranc M.P."/>
            <person name="Lefranc G."/>
        </authorList>
    </citation>
    <scope>NOMENCLATURE</scope>
</reference>
<reference key="4">
    <citation type="journal article" date="2004" name="Nat. Rev. Immunol.">
        <title>The many important facets of T-cell repertoire diversity.</title>
        <authorList>
            <person name="Nikolich-Zugich J."/>
            <person name="Slifka M.K."/>
            <person name="Messaoudi I."/>
        </authorList>
    </citation>
    <scope>REVIEW ON T CELL REPERTOIRE DIVERSITY</scope>
</reference>
<reference key="5">
    <citation type="journal article" date="2010" name="Cold Spring Harb. Perspect. Biol.">
        <title>Structural biology of the T-cell receptor: insights into receptor assembly, ligand recognition, and initiation of signaling.</title>
        <authorList>
            <person name="Wucherpfennig K.W."/>
            <person name="Gagnon E."/>
            <person name="Call M.J."/>
            <person name="Huseby E.S."/>
            <person name="Call M.E."/>
        </authorList>
    </citation>
    <scope>REVIEW ON T CELL RECEPTOR-CD3 COMPLEX ASSEMBLY</scope>
    <scope>SUBCELLULAR LOCATION</scope>
</reference>
<reference key="6">
    <citation type="journal article" date="2013" name="Nat. Rev. Immunol.">
        <title>T cell receptor signalling networks: branched, diversified and bounded.</title>
        <authorList>
            <person name="Brownlie R.J."/>
            <person name="Zamoyska R."/>
        </authorList>
    </citation>
    <scope>REVIEW ON T CELL RECEPTOR SIGNALING</scope>
</reference>
<reference key="7">
    <citation type="journal article" date="2014" name="Front. Immunol.">
        <title>Immunoglobulin and T Cell Receptor Genes: IMGT((R)) and the Birth and Rise of Immunoinformatics.</title>
        <authorList>
            <person name="Lefranc M.P."/>
        </authorList>
    </citation>
    <scope>NOMENCLATURE</scope>
</reference>
<reference key="8">
    <citation type="journal article" date="2015" name="Annu. Rev. Immunol.">
        <title>T cell antigen receptor recognition of antigen-presenting molecules.</title>
        <authorList>
            <person name="Rossjohn J."/>
            <person name="Gras S."/>
            <person name="Miles J.J."/>
            <person name="Turner S.J."/>
            <person name="Godfrey D.I."/>
            <person name="McCluskey J."/>
        </authorList>
    </citation>
    <scope>REVIEW ON FUNCTION</scope>
</reference>
<keyword id="KW-1064">Adaptive immunity</keyword>
<keyword id="KW-1003">Cell membrane</keyword>
<keyword id="KW-1015">Disulfide bond</keyword>
<keyword id="KW-0325">Glycoprotein</keyword>
<keyword id="KW-0391">Immunity</keyword>
<keyword id="KW-0393">Immunoglobulin domain</keyword>
<keyword id="KW-0472">Membrane</keyword>
<keyword id="KW-1267">Proteomics identification</keyword>
<keyword id="KW-0675">Receptor</keyword>
<keyword id="KW-1185">Reference proteome</keyword>
<keyword id="KW-0732">Signal</keyword>
<keyword id="KW-1279">T cell receptor</keyword>
<sequence length="114" mass="12859">MGCRLLCCAVLCLLGAVPIDTEVTQTPKHLVMGMTNKKSLKCEQHMGHRAMYWYKQKAKKPPELMFVYSYEKLSINESVPSRFSPECPNSSLLNLHLHALQPEDSALYLCASSQ</sequence>
<organism>
    <name type="scientific">Homo sapiens</name>
    <name type="common">Human</name>
    <dbReference type="NCBI Taxonomy" id="9606"/>
    <lineage>
        <taxon>Eukaryota</taxon>
        <taxon>Metazoa</taxon>
        <taxon>Chordata</taxon>
        <taxon>Craniata</taxon>
        <taxon>Vertebrata</taxon>
        <taxon>Euteleostomi</taxon>
        <taxon>Mammalia</taxon>
        <taxon>Eutheria</taxon>
        <taxon>Euarchontoglires</taxon>
        <taxon>Primates</taxon>
        <taxon>Haplorrhini</taxon>
        <taxon>Catarrhini</taxon>
        <taxon>Hominidae</taxon>
        <taxon>Homo</taxon>
    </lineage>
</organism>
<feature type="signal peptide" evidence="1">
    <location>
        <begin position="1"/>
        <end position="21"/>
    </location>
</feature>
<feature type="chain" id="PRO_5010101709" description="T cell receptor beta variable 4-1" evidence="1">
    <location>
        <begin position="22"/>
        <end position="114"/>
    </location>
</feature>
<feature type="domain" description="Ig-like" evidence="2">
    <location>
        <begin position="22"/>
        <end position="114" status="greater than"/>
    </location>
</feature>
<feature type="glycosylation site" description="N-linked (GlcNAc...) asparagine" evidence="1">
    <location>
        <position position="76"/>
    </location>
</feature>
<feature type="glycosylation site" description="N-linked (GlcNAc...) asparagine" evidence="1">
    <location>
        <position position="89"/>
    </location>
</feature>
<feature type="disulfide bond" evidence="2">
    <location>
        <begin position="42"/>
        <end position="110"/>
    </location>
</feature>
<feature type="non-terminal residue">
    <location>
        <position position="114"/>
    </location>
</feature>
<dbReference type="EMBL" id="L36092">
    <property type="protein sequence ID" value="AAC80191.1"/>
    <property type="molecule type" value="Genomic_DNA"/>
</dbReference>
<dbReference type="EMBL" id="AC245088">
    <property type="status" value="NOT_ANNOTATED_CDS"/>
    <property type="molecule type" value="Genomic_DNA"/>
</dbReference>
<dbReference type="SMR" id="A0A577"/>
<dbReference type="FunCoup" id="A0A577">
    <property type="interactions" value="392"/>
</dbReference>
<dbReference type="IMGT_GENE-DB" id="TRBV4-1"/>
<dbReference type="GlyCosmos" id="A0A577">
    <property type="glycosylation" value="2 sites, No reported glycans"/>
</dbReference>
<dbReference type="GlyGen" id="A0A577">
    <property type="glycosylation" value="2 sites"/>
</dbReference>
<dbReference type="BioMuta" id="TRBV4-1"/>
<dbReference type="Ensembl" id="ENST00000390357.3">
    <property type="protein sequence ID" value="ENSP00000374880.3"/>
    <property type="gene ID" value="ENSG00000211710.3"/>
</dbReference>
<dbReference type="UCSC" id="uc003vxg.5">
    <property type="organism name" value="human"/>
</dbReference>
<dbReference type="AGR" id="HGNC:12215"/>
<dbReference type="GeneCards" id="TRBV4-1"/>
<dbReference type="HGNC" id="HGNC:12215">
    <property type="gene designation" value="TRBV4-1"/>
</dbReference>
<dbReference type="HPA" id="ENSG00000211710">
    <property type="expression patterns" value="Tissue enriched (lymphoid)"/>
</dbReference>
<dbReference type="neXtProt" id="NX_A0A577"/>
<dbReference type="OpenTargets" id="ENSG00000211710"/>
<dbReference type="VEuPathDB" id="HostDB:ENSG00000211710"/>
<dbReference type="GeneTree" id="ENSGT00940000162509"/>
<dbReference type="HOGENOM" id="CLU_077975_9_1_1"/>
<dbReference type="InParanoid" id="A0A577"/>
<dbReference type="OMA" id="QHMGHRA"/>
<dbReference type="OrthoDB" id="9527848at2759"/>
<dbReference type="PAN-GO" id="A0A577">
    <property type="GO annotations" value="2 GO annotations based on evolutionary models"/>
</dbReference>
<dbReference type="ChiTaRS" id="TRBV4-1">
    <property type="organism name" value="human"/>
</dbReference>
<dbReference type="Pharos" id="A0A577">
    <property type="development level" value="Tdark"/>
</dbReference>
<dbReference type="PRO" id="PR:A0A577"/>
<dbReference type="Proteomes" id="UP000005640">
    <property type="component" value="Chromosome 7"/>
</dbReference>
<dbReference type="Bgee" id="ENSG00000211710">
    <property type="expression patterns" value="Expressed in lymph node and 72 other cell types or tissues"/>
</dbReference>
<dbReference type="GO" id="GO:0005886">
    <property type="term" value="C:plasma membrane"/>
    <property type="evidence" value="ECO:0000318"/>
    <property type="project" value="GO_Central"/>
</dbReference>
<dbReference type="GO" id="GO:0042101">
    <property type="term" value="C:T cell receptor complex"/>
    <property type="evidence" value="ECO:0007669"/>
    <property type="project" value="UniProtKB-KW"/>
</dbReference>
<dbReference type="GO" id="GO:0002250">
    <property type="term" value="P:adaptive immune response"/>
    <property type="evidence" value="ECO:0007669"/>
    <property type="project" value="UniProtKB-KW"/>
</dbReference>
<dbReference type="GO" id="GO:0007166">
    <property type="term" value="P:cell surface receptor signaling pathway"/>
    <property type="evidence" value="ECO:0000318"/>
    <property type="project" value="GO_Central"/>
</dbReference>
<dbReference type="Gene3D" id="2.60.40.10">
    <property type="entry name" value="Immunoglobulins"/>
    <property type="match status" value="1"/>
</dbReference>
<dbReference type="InterPro" id="IPR007110">
    <property type="entry name" value="Ig-like_dom"/>
</dbReference>
<dbReference type="InterPro" id="IPR036179">
    <property type="entry name" value="Ig-like_dom_sf"/>
</dbReference>
<dbReference type="InterPro" id="IPR013783">
    <property type="entry name" value="Ig-like_fold"/>
</dbReference>
<dbReference type="InterPro" id="IPR013106">
    <property type="entry name" value="Ig_V-set"/>
</dbReference>
<dbReference type="InterPro" id="IPR050413">
    <property type="entry name" value="TCR_beta_variable"/>
</dbReference>
<dbReference type="PANTHER" id="PTHR23268:SF40">
    <property type="entry name" value="T CELL RECEPTOR BETA VARIABLE 4-1"/>
    <property type="match status" value="1"/>
</dbReference>
<dbReference type="PANTHER" id="PTHR23268">
    <property type="entry name" value="T-CELL RECEPTOR BETA CHAIN"/>
    <property type="match status" value="1"/>
</dbReference>
<dbReference type="Pfam" id="PF07686">
    <property type="entry name" value="V-set"/>
    <property type="match status" value="1"/>
</dbReference>
<dbReference type="SUPFAM" id="SSF48726">
    <property type="entry name" value="Immunoglobulin"/>
    <property type="match status" value="1"/>
</dbReference>
<dbReference type="PROSITE" id="PS50835">
    <property type="entry name" value="IG_LIKE"/>
    <property type="match status" value="1"/>
</dbReference>
<accession>A0A577</accession>
<accession>A0A075B6L4</accession>
<protein>
    <recommendedName>
        <fullName evidence="9">T cell receptor beta variable 4-1</fullName>
    </recommendedName>
</protein>
<evidence type="ECO:0000255" key="1"/>
<evidence type="ECO:0000255" key="2">
    <source>
        <dbReference type="PROSITE-ProRule" id="PRU00114"/>
    </source>
</evidence>
<evidence type="ECO:0000303" key="3">
    <source>
    </source>
</evidence>
<evidence type="ECO:0000303" key="4">
    <source>
    </source>
</evidence>
<evidence type="ECO:0000303" key="5">
    <source>
    </source>
</evidence>
<evidence type="ECO:0000303" key="6">
    <source>
    </source>
</evidence>
<evidence type="ECO:0000303" key="7">
    <source>
    </source>
</evidence>
<evidence type="ECO:0000303" key="8">
    <source>
    </source>
</evidence>
<evidence type="ECO:0000303" key="9">
    <source ref="3"/>
</evidence>
<evidence type="ECO:0000305" key="10"/>
<name>TVB41_HUMAN</name>
<gene>
    <name evidence="9" type="primary">TRBV4-1</name>
    <name evidence="8" type="synonym">TCRBV7S1A1N2T</name>
</gene>